<gene>
    <name type="ordered locus">BCG9842_B4111</name>
</gene>
<reference key="1">
    <citation type="submission" date="2008-10" db="EMBL/GenBank/DDBJ databases">
        <title>Genome sequence of Bacillus cereus G9842.</title>
        <authorList>
            <person name="Dodson R.J."/>
            <person name="Durkin A.S."/>
            <person name="Rosovitz M.J."/>
            <person name="Rasko D.A."/>
            <person name="Hoffmaster A."/>
            <person name="Ravel J."/>
            <person name="Sutton G."/>
        </authorList>
    </citation>
    <scope>NUCLEOTIDE SEQUENCE [LARGE SCALE GENOMIC DNA]</scope>
    <source>
        <strain>G9842</strain>
    </source>
</reference>
<name>Y4111_BACC2</name>
<protein>
    <recommendedName>
        <fullName evidence="1">UPF0736 protein BCG9842_B4111</fullName>
    </recommendedName>
</protein>
<evidence type="ECO:0000255" key="1">
    <source>
        <dbReference type="HAMAP-Rule" id="MF_01860"/>
    </source>
</evidence>
<proteinExistence type="inferred from homology"/>
<sequence>MLYLHDVWVNWFEGEENGYNVCHFYEWRKDDTIELLDQVPLLKVDATLYHYIEDELLELPQKLLEDVHHKAYIRKNHERLQQEYCFVVTDGKGIIAIDTIGYNVPIRKSRLIPRQEQMVYEMVENVQAEKYEFQVEETEKEHHILSPSPFIMNGLTRKERQLKQLLFMALDQLHTTKNTAEIRYWYTEWDPSAYGTVQHMEFEDIWARLYDEAESGWSEKHEQLCERLVKGQPFFEKLWEMENEQKVN</sequence>
<comment type="similarity">
    <text evidence="1">Belongs to the UPF0736 family.</text>
</comment>
<accession>B7ILC1</accession>
<dbReference type="EMBL" id="CP001186">
    <property type="protein sequence ID" value="ACK97350.1"/>
    <property type="molecule type" value="Genomic_DNA"/>
</dbReference>
<dbReference type="RefSeq" id="WP_000966117.1">
    <property type="nucleotide sequence ID" value="NC_011772.1"/>
</dbReference>
<dbReference type="SMR" id="B7ILC1"/>
<dbReference type="KEGG" id="bcg:BCG9842_B4111"/>
<dbReference type="HOGENOM" id="CLU_1101152_0_0_9"/>
<dbReference type="Proteomes" id="UP000006744">
    <property type="component" value="Chromosome"/>
</dbReference>
<dbReference type="HAMAP" id="MF_01860">
    <property type="entry name" value="UPF0736"/>
    <property type="match status" value="1"/>
</dbReference>
<dbReference type="InterPro" id="IPR020909">
    <property type="entry name" value="UPF0736"/>
</dbReference>
<dbReference type="Pfam" id="PF12227">
    <property type="entry name" value="DUF3603"/>
    <property type="match status" value="1"/>
</dbReference>
<feature type="chain" id="PRO_0000369153" description="UPF0736 protein BCG9842_B4111">
    <location>
        <begin position="1"/>
        <end position="248"/>
    </location>
</feature>
<organism>
    <name type="scientific">Bacillus cereus (strain G9842)</name>
    <dbReference type="NCBI Taxonomy" id="405531"/>
    <lineage>
        <taxon>Bacteria</taxon>
        <taxon>Bacillati</taxon>
        <taxon>Bacillota</taxon>
        <taxon>Bacilli</taxon>
        <taxon>Bacillales</taxon>
        <taxon>Bacillaceae</taxon>
        <taxon>Bacillus</taxon>
        <taxon>Bacillus cereus group</taxon>
    </lineage>
</organism>